<keyword id="KW-0997">Cell inner membrane</keyword>
<keyword id="KW-1003">Cell membrane</keyword>
<keyword id="KW-0143">Chaperone</keyword>
<keyword id="KW-0472">Membrane</keyword>
<keyword id="KW-0653">Protein transport</keyword>
<keyword id="KW-0812">Transmembrane</keyword>
<keyword id="KW-1133">Transmembrane helix</keyword>
<keyword id="KW-0813">Transport</keyword>
<proteinExistence type="inferred from homology"/>
<dbReference type="EMBL" id="CP000026">
    <property type="protein sequence ID" value="AAV79478.1"/>
    <property type="molecule type" value="Genomic_DNA"/>
</dbReference>
<dbReference type="RefSeq" id="WP_000378278.1">
    <property type="nucleotide sequence ID" value="NC_006511.1"/>
</dbReference>
<dbReference type="SMR" id="Q5PKU2"/>
<dbReference type="KEGG" id="spt:SPA3686"/>
<dbReference type="HOGENOM" id="CLU_016535_3_0_6"/>
<dbReference type="Proteomes" id="UP000008185">
    <property type="component" value="Chromosome"/>
</dbReference>
<dbReference type="GO" id="GO:0005886">
    <property type="term" value="C:plasma membrane"/>
    <property type="evidence" value="ECO:0007669"/>
    <property type="project" value="UniProtKB-SubCell"/>
</dbReference>
<dbReference type="GO" id="GO:0032977">
    <property type="term" value="F:membrane insertase activity"/>
    <property type="evidence" value="ECO:0007669"/>
    <property type="project" value="InterPro"/>
</dbReference>
<dbReference type="GO" id="GO:0051205">
    <property type="term" value="P:protein insertion into membrane"/>
    <property type="evidence" value="ECO:0007669"/>
    <property type="project" value="TreeGrafter"/>
</dbReference>
<dbReference type="GO" id="GO:0015031">
    <property type="term" value="P:protein transport"/>
    <property type="evidence" value="ECO:0007669"/>
    <property type="project" value="UniProtKB-KW"/>
</dbReference>
<dbReference type="CDD" id="cd20070">
    <property type="entry name" value="5TM_YidC_Alb3"/>
    <property type="match status" value="1"/>
</dbReference>
<dbReference type="CDD" id="cd19961">
    <property type="entry name" value="EcYidC-like_peri"/>
    <property type="match status" value="1"/>
</dbReference>
<dbReference type="FunFam" id="2.70.98.90:FF:000001">
    <property type="entry name" value="Membrane protein insertase YidC"/>
    <property type="match status" value="1"/>
</dbReference>
<dbReference type="Gene3D" id="2.70.98.90">
    <property type="match status" value="1"/>
</dbReference>
<dbReference type="HAMAP" id="MF_01810">
    <property type="entry name" value="YidC_type1"/>
    <property type="match status" value="1"/>
</dbReference>
<dbReference type="InterPro" id="IPR019998">
    <property type="entry name" value="Membr_insert_YidC"/>
</dbReference>
<dbReference type="InterPro" id="IPR028053">
    <property type="entry name" value="Membr_insert_YidC_N"/>
</dbReference>
<dbReference type="InterPro" id="IPR001708">
    <property type="entry name" value="YidC/ALB3/OXA1/COX18"/>
</dbReference>
<dbReference type="InterPro" id="IPR028055">
    <property type="entry name" value="YidC/Oxa/ALB_C"/>
</dbReference>
<dbReference type="InterPro" id="IPR047196">
    <property type="entry name" value="YidC_ALB_C"/>
</dbReference>
<dbReference type="InterPro" id="IPR038221">
    <property type="entry name" value="YidC_periplasmic_sf"/>
</dbReference>
<dbReference type="NCBIfam" id="NF002351">
    <property type="entry name" value="PRK01318.1-1"/>
    <property type="match status" value="1"/>
</dbReference>
<dbReference type="NCBIfam" id="NF002352">
    <property type="entry name" value="PRK01318.1-3"/>
    <property type="match status" value="1"/>
</dbReference>
<dbReference type="NCBIfam" id="NF002353">
    <property type="entry name" value="PRK01318.1-4"/>
    <property type="match status" value="1"/>
</dbReference>
<dbReference type="NCBIfam" id="TIGR03593">
    <property type="entry name" value="yidC_nterm"/>
    <property type="match status" value="1"/>
</dbReference>
<dbReference type="NCBIfam" id="TIGR03592">
    <property type="entry name" value="yidC_oxa1_cterm"/>
    <property type="match status" value="1"/>
</dbReference>
<dbReference type="PANTHER" id="PTHR12428:SF65">
    <property type="entry name" value="CYTOCHROME C OXIDASE ASSEMBLY PROTEIN COX18, MITOCHONDRIAL"/>
    <property type="match status" value="1"/>
</dbReference>
<dbReference type="PANTHER" id="PTHR12428">
    <property type="entry name" value="OXA1"/>
    <property type="match status" value="1"/>
</dbReference>
<dbReference type="Pfam" id="PF02096">
    <property type="entry name" value="60KD_IMP"/>
    <property type="match status" value="1"/>
</dbReference>
<dbReference type="Pfam" id="PF14849">
    <property type="entry name" value="YidC_periplas"/>
    <property type="match status" value="1"/>
</dbReference>
<dbReference type="PRINTS" id="PR00701">
    <property type="entry name" value="60KDINNERMP"/>
</dbReference>
<dbReference type="PRINTS" id="PR01900">
    <property type="entry name" value="YIDCPROTEIN"/>
</dbReference>
<name>YIDC_SALPA</name>
<evidence type="ECO:0000255" key="1">
    <source>
        <dbReference type="HAMAP-Rule" id="MF_01810"/>
    </source>
</evidence>
<evidence type="ECO:0000256" key="2">
    <source>
        <dbReference type="SAM" id="MobiDB-lite"/>
    </source>
</evidence>
<protein>
    <recommendedName>
        <fullName evidence="1">Membrane protein insertase YidC</fullName>
    </recommendedName>
    <alternativeName>
        <fullName evidence="1">Foldase YidC</fullName>
    </alternativeName>
    <alternativeName>
        <fullName evidence="1">Membrane integrase YidC</fullName>
    </alternativeName>
    <alternativeName>
        <fullName evidence="1">Membrane protein YidC</fullName>
    </alternativeName>
</protein>
<comment type="function">
    <text evidence="1">Required for the insertion and/or proper folding and/or complex formation of integral membrane proteins into the membrane. Involved in integration of membrane proteins that insert both dependently and independently of the Sec translocase complex, as well as at least some lipoproteins. Aids folding of multispanning membrane proteins.</text>
</comment>
<comment type="subunit">
    <text evidence="1">Interacts with the Sec translocase complex via SecD. Specifically interacts with transmembrane segments of nascent integral membrane proteins during membrane integration.</text>
</comment>
<comment type="subcellular location">
    <subcellularLocation>
        <location evidence="1">Cell inner membrane</location>
        <topology evidence="1">Multi-pass membrane protein</topology>
    </subcellularLocation>
</comment>
<comment type="similarity">
    <text evidence="1">Belongs to the OXA1/ALB3/YidC family. Type 1 subfamily.</text>
</comment>
<feature type="chain" id="PRO_1000070163" description="Membrane protein insertase YidC">
    <location>
        <begin position="1"/>
        <end position="548"/>
    </location>
</feature>
<feature type="transmembrane region" description="Helical" evidence="1">
    <location>
        <begin position="6"/>
        <end position="26"/>
    </location>
</feature>
<feature type="transmembrane region" description="Helical" evidence="1">
    <location>
        <begin position="350"/>
        <end position="370"/>
    </location>
</feature>
<feature type="transmembrane region" description="Helical" evidence="1">
    <location>
        <begin position="424"/>
        <end position="444"/>
    </location>
</feature>
<feature type="transmembrane region" description="Helical" evidence="1">
    <location>
        <begin position="458"/>
        <end position="478"/>
    </location>
</feature>
<feature type="transmembrane region" description="Helical" evidence="1">
    <location>
        <begin position="499"/>
        <end position="519"/>
    </location>
</feature>
<feature type="region of interest" description="Disordered" evidence="2">
    <location>
        <begin position="28"/>
        <end position="56"/>
    </location>
</feature>
<feature type="compositionally biased region" description="Low complexity" evidence="2">
    <location>
        <begin position="29"/>
        <end position="42"/>
    </location>
</feature>
<organism>
    <name type="scientific">Salmonella paratyphi A (strain ATCC 9150 / SARB42)</name>
    <dbReference type="NCBI Taxonomy" id="295319"/>
    <lineage>
        <taxon>Bacteria</taxon>
        <taxon>Pseudomonadati</taxon>
        <taxon>Pseudomonadota</taxon>
        <taxon>Gammaproteobacteria</taxon>
        <taxon>Enterobacterales</taxon>
        <taxon>Enterobacteriaceae</taxon>
        <taxon>Salmonella</taxon>
    </lineage>
</organism>
<accession>Q5PKU2</accession>
<gene>
    <name evidence="1" type="primary">yidC</name>
    <name type="ordered locus">SPA3686</name>
</gene>
<reference key="1">
    <citation type="journal article" date="2004" name="Nat. Genet.">
        <title>Comparison of genome degradation in Paratyphi A and Typhi, human-restricted serovars of Salmonella enterica that cause typhoid.</title>
        <authorList>
            <person name="McClelland M."/>
            <person name="Sanderson K.E."/>
            <person name="Clifton S.W."/>
            <person name="Latreille P."/>
            <person name="Porwollik S."/>
            <person name="Sabo A."/>
            <person name="Meyer R."/>
            <person name="Bieri T."/>
            <person name="Ozersky P."/>
            <person name="McLellan M."/>
            <person name="Harkins C.R."/>
            <person name="Wang C."/>
            <person name="Nguyen C."/>
            <person name="Berghoff A."/>
            <person name="Elliott G."/>
            <person name="Kohlberg S."/>
            <person name="Strong C."/>
            <person name="Du F."/>
            <person name="Carter J."/>
            <person name="Kremizki C."/>
            <person name="Layman D."/>
            <person name="Leonard S."/>
            <person name="Sun H."/>
            <person name="Fulton L."/>
            <person name="Nash W."/>
            <person name="Miner T."/>
            <person name="Minx P."/>
            <person name="Delehaunty K."/>
            <person name="Fronick C."/>
            <person name="Magrini V."/>
            <person name="Nhan M."/>
            <person name="Warren W."/>
            <person name="Florea L."/>
            <person name="Spieth J."/>
            <person name="Wilson R.K."/>
        </authorList>
    </citation>
    <scope>NUCLEOTIDE SEQUENCE [LARGE SCALE GENOMIC DNA]</scope>
    <source>
        <strain>ATCC 9150 / SARB42</strain>
    </source>
</reference>
<sequence>MDSQRNLLVIALLFVSFMIWQAWEQDKNPQPQTQQTTQTTTTAAGSAADQGVPASGQGKMITVKTDVLDLTINTRGGDVEQALLPAYPKELGSNEPFQLLETTPQFIYQAQSGLTGRDGPDNPANGPRPLYNVEKDAFVLADGQNELQVPMTYTDAAGNTFTKTFVFKRGDYAVNVNYSVQNTGEKPLEVSTFGQLKQSVNLPPHRDTGSSNFALHTFRGAAYSTPDEKYEKYKFDTIADNENLNVSSKGGWVAMLQQYFATAWIPRNDGTNNFYTANLGNGIVAIGYKAQPVLVQPGQTGAMTSTLWVGPEIQDKMAAVAPHLDLTVDYGWLWFISQPLFKLLKWIHSFVGNWGFSIIIITFIVRGIMYPLTKAQYTSMAKMRMLQPKIQAMRERLGDDKQRQSQEMMALYKAEKVNPLGGCFPLIIQMPIFLALYYMLMGSIELRHAPFALWIHDLSAQDPYYILPILMGVTMFFIQKMSPTTVTDPMQQKIMTFMPVIFTVFFLWFPSGLVLYYIVSNLVTIIQQQLIYRGLEKRGLHSREKKKS</sequence>